<gene>
    <name type="primary">PA</name>
</gene>
<accession>P0DJU0</accession>
<comment type="function">
    <text evidence="1 4">Plays a major role in the shutoff of the host protein expression by cleaving mRNAs probably via an endonuclease activity. This host shutoff allows the virus to escape from the host antiviral response (By similarity). Hijacks host RNA splicing machinery to selectively target host RNAs containing introns for destruction. This may explain the preferential degradation of RNAs that have undergone co- or post-transcriptional processing (By similarity).</text>
</comment>
<comment type="subcellular location">
    <subcellularLocation>
        <location evidence="4">Host cytoplasm</location>
    </subcellularLocation>
    <subcellularLocation>
        <location evidence="4">Host nucleus</location>
    </subcellularLocation>
</comment>
<comment type="alternative products">
    <event type="ribosomal frameshifting"/>
    <isoform>
        <id>P0DJU0-1</id>
        <name>PA-X</name>
        <sequence type="displayed"/>
    </isoform>
    <isoform>
        <id>Q6XTB1-1</id>
        <name>PA</name>
        <sequence type="external"/>
    </isoform>
</comment>
<comment type="domain">
    <text evidence="1 4">The probable endonuclease active site in the N-terminus and the basic amino acid cluster in the C-terminus are important for the shutoff activity. The C-terminus acts as a nuclear localization signal (By similarity). The C-terminus is recruited to host protein complexes involved in nuclear Pol II RNA processing (By similarity).</text>
</comment>
<comment type="similarity">
    <text evidence="6">Belongs to the influenza viruses PA-X family.</text>
</comment>
<protein>
    <recommendedName>
        <fullName>Protein PA-X</fullName>
    </recommendedName>
</protein>
<organism>
    <name type="scientific">Influenza A virus (strain A/Qu/7/1970 H3N2)</name>
    <dbReference type="NCBI Taxonomy" id="221016"/>
    <lineage>
        <taxon>Viruses</taxon>
        <taxon>Riboviria</taxon>
        <taxon>Orthornavirae</taxon>
        <taxon>Negarnaviricota</taxon>
        <taxon>Polyploviricotina</taxon>
        <taxon>Insthoviricetes</taxon>
        <taxon>Articulavirales</taxon>
        <taxon>Orthomyxoviridae</taxon>
        <taxon>Alphainfluenzavirus</taxon>
        <taxon>Alphainfluenzavirus influenzae</taxon>
        <taxon>Influenza A virus</taxon>
    </lineage>
</organism>
<proteinExistence type="inferred from homology"/>
<evidence type="ECO:0000250" key="1">
    <source>
        <dbReference type="UniProtKB" id="P0CK64"/>
    </source>
</evidence>
<evidence type="ECO:0000250" key="2">
    <source>
        <dbReference type="UniProtKB" id="P0CK68"/>
    </source>
</evidence>
<evidence type="ECO:0000250" key="3">
    <source>
        <dbReference type="UniProtKB" id="P0DJW8"/>
    </source>
</evidence>
<evidence type="ECO:0000250" key="4">
    <source>
        <dbReference type="UniProtKB" id="P0DXO5"/>
    </source>
</evidence>
<evidence type="ECO:0000250" key="5">
    <source>
        <dbReference type="UniProtKB" id="P0DXO6"/>
    </source>
</evidence>
<evidence type="ECO:0000305" key="6"/>
<keyword id="KW-1132">Decay of host mRNAs by virus</keyword>
<keyword id="KW-1262">Eukaryotic host gene expression shutoff by virus</keyword>
<keyword id="KW-1035">Host cytoplasm</keyword>
<keyword id="KW-1190">Host gene expression shutoff by virus</keyword>
<keyword id="KW-1192">Host mRNA suppression by virus</keyword>
<keyword id="KW-1048">Host nucleus</keyword>
<keyword id="KW-0945">Host-virus interaction</keyword>
<keyword id="KW-0688">Ribosomal frameshifting</keyword>
<organismHost>
    <name type="scientific">Aves</name>
    <dbReference type="NCBI Taxonomy" id="8782"/>
</organismHost>
<organismHost>
    <name type="scientific">Cetacea</name>
    <name type="common">whales</name>
    <dbReference type="NCBI Taxonomy" id="9721"/>
</organismHost>
<organismHost>
    <name type="scientific">Homo sapiens</name>
    <name type="common">Human</name>
    <dbReference type="NCBI Taxonomy" id="9606"/>
</organismHost>
<organismHost>
    <name type="scientific">Phocidae</name>
    <name type="common">true seals</name>
    <dbReference type="NCBI Taxonomy" id="9709"/>
</organismHost>
<organismHost>
    <name type="scientific">Sus scrofa</name>
    <name type="common">Pig</name>
    <dbReference type="NCBI Taxonomy" id="9823"/>
</organismHost>
<sequence>MEDFVRQCFNPMIVELAEKAMKEYGEDLKIETNKFAAICTHLEVCFMYSDFHFINEQGESIVVELDDPNALLKHRFEIIEGRDRTMAWTVVNSICNTTGAEKPKFLPDLYDYKENRFIEIGVTRREVHIYYLEKANKIKSENTHIHIFSFTGEEMATKADYTLDEESRARIKTRLFTIRQEMANRGLWDSFVSPKEAKKQLKKDLKSQEQCAGLPTKVSRRTSPALRILEPMWMDSNRTAALRASFLKCPKK</sequence>
<dbReference type="EMBL" id="AY210201">
    <property type="status" value="NOT_ANNOTATED_CDS"/>
    <property type="molecule type" value="Genomic_RNA"/>
</dbReference>
<dbReference type="SMR" id="P0DJU0"/>
<dbReference type="GO" id="GO:0003723">
    <property type="term" value="F:RNA binding"/>
    <property type="evidence" value="ECO:0007669"/>
    <property type="project" value="InterPro"/>
</dbReference>
<dbReference type="GO" id="GO:0039694">
    <property type="term" value="P:viral RNA genome replication"/>
    <property type="evidence" value="ECO:0007669"/>
    <property type="project" value="InterPro"/>
</dbReference>
<dbReference type="GO" id="GO:0075523">
    <property type="term" value="P:viral translational frameshifting"/>
    <property type="evidence" value="ECO:0007669"/>
    <property type="project" value="UniProtKB-KW"/>
</dbReference>
<dbReference type="FunFam" id="3.40.91.90:FF:000001">
    <property type="entry name" value="Polymerase acidic protein"/>
    <property type="match status" value="1"/>
</dbReference>
<dbReference type="Gene3D" id="3.40.91.90">
    <property type="entry name" value="Influenza RNA-dependent RNA polymerase subunit PA, endonuclease domain"/>
    <property type="match status" value="1"/>
</dbReference>
<dbReference type="InterPro" id="IPR001009">
    <property type="entry name" value="PA/PA-X"/>
</dbReference>
<dbReference type="InterPro" id="IPR038372">
    <property type="entry name" value="PA/PA-X_sf"/>
</dbReference>
<dbReference type="Pfam" id="PF00603">
    <property type="entry name" value="Flu_PA"/>
    <property type="match status" value="1"/>
</dbReference>
<name>PAX_I70A0</name>
<reference key="1">
    <citation type="journal article" date="2004" name="Virology">
        <title>Genetic analysis of human H2N2 and early H3N2 influenza viruses, 1957-1972: evidence for genetic divergence and multiple reassortment events.</title>
        <authorList>
            <person name="Lindstrom S.E."/>
            <person name="Cox N.J."/>
            <person name="Klimov A."/>
        </authorList>
    </citation>
    <scope>NUCLEOTIDE SEQUENCE [GENOMIC RNA]</scope>
</reference>
<feature type="chain" id="PRO_0000419403" description="Protein PA-X">
    <location>
        <begin position="1"/>
        <end position="252"/>
    </location>
</feature>
<feature type="active site" evidence="2">
    <location>
        <position position="80"/>
    </location>
</feature>
<feature type="active site" evidence="2">
    <location>
        <position position="108"/>
    </location>
</feature>
<feature type="site" description="Important for efficient shutoff activity" evidence="5">
    <location>
        <position position="28"/>
    </location>
</feature>
<feature type="site" description="Important for efficient shutoff activity" evidence="5">
    <location>
        <position position="65"/>
    </location>
</feature>
<feature type="site" description="Important for efficient shutoff activity and nuclear localization" evidence="4">
    <location>
        <position position="195"/>
    </location>
</feature>
<feature type="site" description="Important for efficient shutoff activity and nuclear localization" evidence="4">
    <location>
        <position position="198"/>
    </location>
</feature>
<feature type="site" description="Important for efficient shutoff activity and nuclear localization" evidence="4">
    <location>
        <position position="199"/>
    </location>
</feature>
<feature type="site" description="Important for efficient shutoff activity" evidence="3">
    <location>
        <position position="202"/>
    </location>
</feature>
<feature type="site" description="Important for efficient shutoff activity" evidence="3">
    <location>
        <position position="203"/>
    </location>
</feature>
<feature type="site" description="Important for efficient shutoff activity" evidence="3">
    <location>
        <position position="206"/>
    </location>
</feature>